<evidence type="ECO:0000250" key="1">
    <source>
        <dbReference type="UniProtKB" id="P08219"/>
    </source>
</evidence>
<evidence type="ECO:0000250" key="2">
    <source>
        <dbReference type="UniProtKB" id="P14867"/>
    </source>
</evidence>
<evidence type="ECO:0000250" key="3">
    <source>
        <dbReference type="UniProtKB" id="P62812"/>
    </source>
</evidence>
<evidence type="ECO:0000250" key="4">
    <source>
        <dbReference type="UniProtKB" id="P62813"/>
    </source>
</evidence>
<evidence type="ECO:0000255" key="5"/>
<evidence type="ECO:0000305" key="6"/>
<proteinExistence type="evidence at transcript level"/>
<comment type="function">
    <text evidence="1 2 3 4">Alpha subunit of the heteropentameric ligand-gated chloride channel gated by gamma-aminobutyric acid (GABA), a major inhibitory neurotransmitter in the brain. GABA-gated chloride channels, also named GABA(A) receptors (GABAAR), consist of five subunits arranged around a central pore and contain GABA active binding site(s) located at the alpha and beta subunit interface(s) (By similarity). When activated by GABA, GABAARs selectively allow the flow of chloride anions across the cell membrane down their electrochemical gradient (By similarity). Alpha-1/GABRA1-containing GABAARs are largely synaptic (By similarity). Chloride influx into the postsynaptic neuron following GABAAR opening decreases the neuron ability to generate a new action potential, thereby reducing nerve transmission (By similarity). GABAARs containing alpha-1 and beta-2 or -3 subunits exhibit synaptogenic activity; the gamma-2 subunit being necessary but not sufficient to induce rapid synaptic contacts formation (By similarity). GABAARs function also as histamine receptor where histamine binds at the interface of two neighboring beta subunits and potentiates GABA response (By similarity). GABAARs containing alpha, beta and epsilon subunits also permit spontaneous chloride channel activity while preserving the structural information required for GABA-gated openings (By similarity). Alpha-1-mediated plasticity in the orbitofrontal cortex regulates context-dependent action selection (By similarity). Together with rho subunits, may also control neuronal and glial GABAergic transmission in the cerebellum (By similarity).</text>
</comment>
<comment type="catalytic activity">
    <reaction evidence="1">
        <text>chloride(in) = chloride(out)</text>
        <dbReference type="Rhea" id="RHEA:29823"/>
        <dbReference type="ChEBI" id="CHEBI:17996"/>
    </reaction>
</comment>
<comment type="activity regulation">
    <text evidence="2 4">Allosterically activated by benzodiazepines, the neuroanesthetic alphaxalone and pentobarbital (By similarity). Inhibited by the antagonist bicuculline (By similarity). Potentiated by histamine (By similarity).</text>
</comment>
<comment type="subunit">
    <text evidence="2 3 4">Heteropentamer, formed by a combination of alpha (GABRA1-6), beta (GABRB1-3), gamma (GABRG1-3), delta (GABRD), epsilon (GABRE), rho (GABRR1-3), pi (GABRP) and theta (GABRQ) subunits, each subunit exhibiting distinct physiological and pharmacological properties (By similarity). Interacts with UBQLN1 (By similarity). Interacts with TRAK1 (By similarity). Interacts with KIF21B (By similarity). Identified in a complex of 720 kDa composed of LHFPL4, NLGN2, GABRA1, GABRB2, GABRG2 and GABRB3 (By similarity). Interacts with LHFPL4 (By similarity). Interacts with NLGN2 (By similarity). Interacts with SHISA7; interaction leads to the regulation of GABA(A) receptor trafficking, channel deactivation kinetics and pharmacology (By similarity).</text>
</comment>
<comment type="subcellular location">
    <subcellularLocation>
        <location evidence="1">Postsynaptic cell membrane</location>
        <topology evidence="2">Multi-pass membrane protein</topology>
    </subcellularLocation>
    <subcellularLocation>
        <location evidence="4">Cell membrane</location>
        <topology evidence="2">Multi-pass membrane protein</topology>
    </subcellularLocation>
    <subcellularLocation>
        <location evidence="4">Cytoplasmic vesicle membrane</location>
    </subcellularLocation>
</comment>
<comment type="domain">
    <text evidence="3">The extracellular domain contributes to synaptic contact formation.</text>
</comment>
<comment type="domain">
    <text evidence="2">The GABA-binding pockets are located at the interface between neighboring alpha and beta subunits.</text>
</comment>
<comment type="domain">
    <text evidence="2">GABAARs subunits share a common topological structure: a peptide sequence made up of a long extracellular N-terminal, four transmembrane domains, intracellular or cytoplasmic domain located between the third and the fourth transmembrane domains.</text>
</comment>
<comment type="similarity">
    <text evidence="6">Belongs to the ligand-gated ion channel (TC 1.A.9) family. Gamma-aminobutyric acid receptor (TC 1.A.9.5) subfamily. GABRA1 sub-subfamily.</text>
</comment>
<protein>
    <recommendedName>
        <fullName>Gamma-aminobutyric acid receptor subunit alpha-1</fullName>
    </recommendedName>
    <alternativeName>
        <fullName evidence="2">GABA(A) receptor subunit alpha-1</fullName>
        <shortName evidence="2">GABAAR subunit alpha-1</shortName>
    </alternativeName>
</protein>
<gene>
    <name type="primary">GABRA1</name>
    <name type="ORF">QccE-21460</name>
</gene>
<reference key="1">
    <citation type="submission" date="2005-06" db="EMBL/GenBank/DDBJ databases">
        <title>DNA sequences of macaque genes expressed in brain or testis and its evolutionary implications.</title>
        <authorList>
            <consortium name="International consortium for macaque cDNA sequencing and analysis"/>
        </authorList>
    </citation>
    <scope>NUCLEOTIDE SEQUENCE [LARGE SCALE MRNA]</scope>
    <source>
        <tissue>Brain cortex</tissue>
    </source>
</reference>
<sequence>MRKSPGLSDYLWAWILLLSTLTGRSYGQPSLQDELKDNTTVFTRILDRLLDGYDNRLRPGLGERVTEVKTDIFVTSFGPVSDHDMEYTIDVFFRQSWKDERLKFKGPMTVLRLNNLMASKIWTPDTFFHNGKKSVAHNMTMPNKLLRITEDGTLLYTMRLTVRAECPMHLEDFPMDAHACPLKFGSYAYTRAEVVYEWTREPARSVVVAEDGSRLNQYDLLGQTVDSGIVQSSTGEYVVMTTHFHLKRKIGYFVIQTYLPCIMTVILSQVSFWLNRESVPARTVFGVTTVLTMTTLSISARNSLPKVAYATAMDWFIAVCYAFVFSALIEFATVNYFTKRGYAWDGKSVVPEKPKKVKDPLIKKNNTYAPTATSYTPNLARGDPGLATIAKSATIEPKEVKPETKPPEPKKTFNSVSKIDRLSRIAFPLLFGIFNLVYWATYLNREPQLKAPTPHQ</sequence>
<feature type="signal peptide" evidence="5">
    <location>
        <begin position="1"/>
        <end position="27"/>
    </location>
</feature>
<feature type="chain" id="PRO_0000317029" description="Gamma-aminobutyric acid receptor subunit alpha-1">
    <location>
        <begin position="28"/>
        <end position="456"/>
    </location>
</feature>
<feature type="topological domain" description="Extracellular" evidence="6">
    <location>
        <begin position="28"/>
        <end position="253"/>
    </location>
</feature>
<feature type="transmembrane region" description="Helical" evidence="2">
    <location>
        <begin position="254"/>
        <end position="274"/>
    </location>
</feature>
<feature type="topological domain" description="Cytoplasmic" evidence="6">
    <location>
        <begin position="275"/>
        <end position="279"/>
    </location>
</feature>
<feature type="transmembrane region" description="Helical" evidence="2">
    <location>
        <begin position="280"/>
        <end position="301"/>
    </location>
</feature>
<feature type="topological domain" description="Extracellular" evidence="6">
    <location>
        <begin position="302"/>
        <end position="311"/>
    </location>
</feature>
<feature type="transmembrane region" description="Helical" evidence="2">
    <location>
        <begin position="312"/>
        <end position="333"/>
    </location>
</feature>
<feature type="topological domain" description="Cytoplasmic" evidence="6">
    <location>
        <begin position="334"/>
        <end position="421"/>
    </location>
</feature>
<feature type="transmembrane region" description="Helical" evidence="2">
    <location>
        <begin position="422"/>
        <end position="441"/>
    </location>
</feature>
<feature type="topological domain" description="Extracellular" evidence="6">
    <location>
        <begin position="442"/>
        <end position="456"/>
    </location>
</feature>
<feature type="binding site" evidence="2 4">
    <location>
        <position position="94"/>
    </location>
    <ligand>
        <name>4-aminobutanoate</name>
        <dbReference type="ChEBI" id="CHEBI:59888"/>
        <note>ligand shared with the neighboring beta subunit</note>
    </ligand>
</feature>
<feature type="binding site" evidence="4">
    <location>
        <position position="157"/>
    </location>
    <ligand>
        <name>4-aminobutanoate</name>
        <dbReference type="ChEBI" id="CHEBI:59888"/>
        <note>ligand shared with the neighboring beta subunit</note>
    </ligand>
</feature>
<feature type="glycosylation site" description="N-linked (GlcNAc...) asparagine" evidence="5">
    <location>
        <position position="38"/>
    </location>
</feature>
<feature type="glycosylation site" description="N-linked (GlcNAc...) asparagine" evidence="5">
    <location>
        <position position="138"/>
    </location>
</feature>
<feature type="disulfide bond" evidence="2">
    <location>
        <begin position="166"/>
        <end position="180"/>
    </location>
</feature>
<organism>
    <name type="scientific">Macaca fascicularis</name>
    <name type="common">Crab-eating macaque</name>
    <name type="synonym">Cynomolgus monkey</name>
    <dbReference type="NCBI Taxonomy" id="9541"/>
    <lineage>
        <taxon>Eukaryota</taxon>
        <taxon>Metazoa</taxon>
        <taxon>Chordata</taxon>
        <taxon>Craniata</taxon>
        <taxon>Vertebrata</taxon>
        <taxon>Euteleostomi</taxon>
        <taxon>Mammalia</taxon>
        <taxon>Eutheria</taxon>
        <taxon>Euarchontoglires</taxon>
        <taxon>Primates</taxon>
        <taxon>Haplorrhini</taxon>
        <taxon>Catarrhini</taxon>
        <taxon>Cercopithecidae</taxon>
        <taxon>Cercopithecinae</taxon>
        <taxon>Macaca</taxon>
    </lineage>
</organism>
<name>GBRA1_MACFA</name>
<dbReference type="EMBL" id="AB169710">
    <property type="protein sequence ID" value="BAE01791.1"/>
    <property type="molecule type" value="mRNA"/>
</dbReference>
<dbReference type="RefSeq" id="NP_001274551.1">
    <property type="nucleotide sequence ID" value="NM_001287622.1"/>
</dbReference>
<dbReference type="RefSeq" id="XP_005558510.1">
    <property type="nucleotide sequence ID" value="XM_005558453.4"/>
</dbReference>
<dbReference type="RefSeq" id="XP_045250420.2">
    <property type="nucleotide sequence ID" value="XM_045394485.2"/>
</dbReference>
<dbReference type="SMR" id="Q4R534"/>
<dbReference type="STRING" id="9541.ENSMFAP00000007882"/>
<dbReference type="GlyCosmos" id="Q4R534">
    <property type="glycosylation" value="2 sites, No reported glycans"/>
</dbReference>
<dbReference type="Ensembl" id="ENSMFAT00000026612.2">
    <property type="protein sequence ID" value="ENSMFAP00000007918.2"/>
    <property type="gene ID" value="ENSMFAG00000045791.2"/>
</dbReference>
<dbReference type="GeneID" id="102139513"/>
<dbReference type="CTD" id="2554"/>
<dbReference type="VEuPathDB" id="HostDB:ENSMFAG00000045791"/>
<dbReference type="eggNOG" id="KOG3642">
    <property type="taxonomic scope" value="Eukaryota"/>
</dbReference>
<dbReference type="GeneTree" id="ENSGT00940000159136"/>
<dbReference type="OMA" id="YLWAYLF"/>
<dbReference type="Proteomes" id="UP000233100">
    <property type="component" value="Chromosome 6"/>
</dbReference>
<dbReference type="Bgee" id="ENSMFAG00000045791">
    <property type="expression patterns" value="Expressed in cerebellum and 2 other cell types or tissues"/>
</dbReference>
<dbReference type="GO" id="GO:0034707">
    <property type="term" value="C:chloride channel complex"/>
    <property type="evidence" value="ECO:0007669"/>
    <property type="project" value="UniProtKB-KW"/>
</dbReference>
<dbReference type="GO" id="GO:0030659">
    <property type="term" value="C:cytoplasmic vesicle membrane"/>
    <property type="evidence" value="ECO:0007669"/>
    <property type="project" value="UniProtKB-SubCell"/>
</dbReference>
<dbReference type="GO" id="GO:1902711">
    <property type="term" value="C:GABA-A receptor complex"/>
    <property type="evidence" value="ECO:0000250"/>
    <property type="project" value="UniProtKB"/>
</dbReference>
<dbReference type="GO" id="GO:0099634">
    <property type="term" value="C:postsynaptic specialization membrane"/>
    <property type="evidence" value="ECO:0000250"/>
    <property type="project" value="UniProtKB"/>
</dbReference>
<dbReference type="GO" id="GO:0004890">
    <property type="term" value="F:GABA-A receptor activity"/>
    <property type="evidence" value="ECO:0000250"/>
    <property type="project" value="UniProtKB"/>
</dbReference>
<dbReference type="GO" id="GO:0022851">
    <property type="term" value="F:GABA-gated chloride ion channel activity"/>
    <property type="evidence" value="ECO:0000250"/>
    <property type="project" value="UniProtKB"/>
</dbReference>
<dbReference type="GO" id="GO:0007214">
    <property type="term" value="P:gamma-aminobutyric acid signaling pathway"/>
    <property type="evidence" value="ECO:0007669"/>
    <property type="project" value="InterPro"/>
</dbReference>
<dbReference type="GO" id="GO:1904862">
    <property type="term" value="P:inhibitory synapse assembly"/>
    <property type="evidence" value="ECO:0000250"/>
    <property type="project" value="UniProtKB"/>
</dbReference>
<dbReference type="CDD" id="cd19034">
    <property type="entry name" value="LGIC_ECD_GABAAR_A1"/>
    <property type="match status" value="1"/>
</dbReference>
<dbReference type="CDD" id="cd19052">
    <property type="entry name" value="LGIC_TM_GABAAR_alpha"/>
    <property type="match status" value="1"/>
</dbReference>
<dbReference type="FunFam" id="2.70.170.10:FF:000001">
    <property type="entry name" value="Gamma-aminobutyric acid A receptor subunit alpha-2"/>
    <property type="match status" value="1"/>
</dbReference>
<dbReference type="FunFam" id="1.20.58.390:FF:000002">
    <property type="entry name" value="Putative gamma-aminobutyric acid receptor subunit alpha-5"/>
    <property type="match status" value="1"/>
</dbReference>
<dbReference type="Gene3D" id="2.70.170.10">
    <property type="entry name" value="Neurotransmitter-gated ion-channel ligand-binding domain"/>
    <property type="match status" value="1"/>
</dbReference>
<dbReference type="Gene3D" id="1.20.58.390">
    <property type="entry name" value="Neurotransmitter-gated ion-channel transmembrane domain"/>
    <property type="match status" value="1"/>
</dbReference>
<dbReference type="InterPro" id="IPR006028">
    <property type="entry name" value="GABAA/Glycine_rcpt"/>
</dbReference>
<dbReference type="InterPro" id="IPR001390">
    <property type="entry name" value="GABAAa_rcpt"/>
</dbReference>
<dbReference type="InterPro" id="IPR005431">
    <property type="entry name" value="GABBAa1_rcpt"/>
</dbReference>
<dbReference type="InterPro" id="IPR047024">
    <property type="entry name" value="Gabra-1-6_TM"/>
</dbReference>
<dbReference type="InterPro" id="IPR047079">
    <property type="entry name" value="GABRA1_ECD"/>
</dbReference>
<dbReference type="InterPro" id="IPR006202">
    <property type="entry name" value="Neur_chan_lig-bd"/>
</dbReference>
<dbReference type="InterPro" id="IPR036734">
    <property type="entry name" value="Neur_chan_lig-bd_sf"/>
</dbReference>
<dbReference type="InterPro" id="IPR006201">
    <property type="entry name" value="Neur_channel"/>
</dbReference>
<dbReference type="InterPro" id="IPR036719">
    <property type="entry name" value="Neuro-gated_channel_TM_sf"/>
</dbReference>
<dbReference type="InterPro" id="IPR038050">
    <property type="entry name" value="Neuro_actylchol_rec"/>
</dbReference>
<dbReference type="InterPro" id="IPR006029">
    <property type="entry name" value="Neurotrans-gated_channel_TM"/>
</dbReference>
<dbReference type="InterPro" id="IPR018000">
    <property type="entry name" value="Neurotransmitter_ion_chnl_CS"/>
</dbReference>
<dbReference type="NCBIfam" id="TIGR00860">
    <property type="entry name" value="LIC"/>
    <property type="match status" value="1"/>
</dbReference>
<dbReference type="PANTHER" id="PTHR18945">
    <property type="entry name" value="NEUROTRANSMITTER GATED ION CHANNEL"/>
    <property type="match status" value="1"/>
</dbReference>
<dbReference type="Pfam" id="PF02931">
    <property type="entry name" value="Neur_chan_LBD"/>
    <property type="match status" value="1"/>
</dbReference>
<dbReference type="Pfam" id="PF02932">
    <property type="entry name" value="Neur_chan_memb"/>
    <property type="match status" value="2"/>
</dbReference>
<dbReference type="PRINTS" id="PR01079">
    <property type="entry name" value="GABAARALPHA"/>
</dbReference>
<dbReference type="PRINTS" id="PR01614">
    <property type="entry name" value="GABAARALPHA1"/>
</dbReference>
<dbReference type="PRINTS" id="PR00253">
    <property type="entry name" value="GABAARECEPTR"/>
</dbReference>
<dbReference type="PRINTS" id="PR00252">
    <property type="entry name" value="NRIONCHANNEL"/>
</dbReference>
<dbReference type="SUPFAM" id="SSF90112">
    <property type="entry name" value="Neurotransmitter-gated ion-channel transmembrane pore"/>
    <property type="match status" value="1"/>
</dbReference>
<dbReference type="SUPFAM" id="SSF63712">
    <property type="entry name" value="Nicotinic receptor ligand binding domain-like"/>
    <property type="match status" value="1"/>
</dbReference>
<dbReference type="PROSITE" id="PS00236">
    <property type="entry name" value="NEUROTR_ION_CHANNEL"/>
    <property type="match status" value="1"/>
</dbReference>
<accession>Q4R534</accession>
<keyword id="KW-1003">Cell membrane</keyword>
<keyword id="KW-0868">Chloride</keyword>
<keyword id="KW-0869">Chloride channel</keyword>
<keyword id="KW-0968">Cytoplasmic vesicle</keyword>
<keyword id="KW-1015">Disulfide bond</keyword>
<keyword id="KW-0325">Glycoprotein</keyword>
<keyword id="KW-0407">Ion channel</keyword>
<keyword id="KW-0406">Ion transport</keyword>
<keyword id="KW-1071">Ligand-gated ion channel</keyword>
<keyword id="KW-0472">Membrane</keyword>
<keyword id="KW-0628">Postsynaptic cell membrane</keyword>
<keyword id="KW-0675">Receptor</keyword>
<keyword id="KW-1185">Reference proteome</keyword>
<keyword id="KW-0732">Signal</keyword>
<keyword id="KW-0770">Synapse</keyword>
<keyword id="KW-0812">Transmembrane</keyword>
<keyword id="KW-1133">Transmembrane helix</keyword>
<keyword id="KW-0813">Transport</keyword>